<keyword id="KW-1185">Reference proteome</keyword>
<keyword id="KW-0687">Ribonucleoprotein</keyword>
<keyword id="KW-0689">Ribosomal protein</keyword>
<keyword id="KW-0694">RNA-binding</keyword>
<keyword id="KW-0699">rRNA-binding</keyword>
<keyword id="KW-0820">tRNA-binding</keyword>
<proteinExistence type="inferred from homology"/>
<comment type="function">
    <text evidence="1">Binds 23S rRNA and is also seen to make contacts with the A and possibly P site tRNAs.</text>
</comment>
<comment type="subunit">
    <text evidence="1">Part of the 50S ribosomal subunit.</text>
</comment>
<comment type="similarity">
    <text evidence="1">Belongs to the universal ribosomal protein uL16 family.</text>
</comment>
<reference key="1">
    <citation type="journal article" date="2009" name="Proc. Natl. Acad. Sci. U.S.A.">
        <title>Characterizing a model human gut microbiota composed of members of its two dominant bacterial phyla.</title>
        <authorList>
            <person name="Mahowald M.A."/>
            <person name="Rey F.E."/>
            <person name="Seedorf H."/>
            <person name="Turnbaugh P.J."/>
            <person name="Fulton R.S."/>
            <person name="Wollam A."/>
            <person name="Shah N."/>
            <person name="Wang C."/>
            <person name="Magrini V."/>
            <person name="Wilson R.K."/>
            <person name="Cantarel B.L."/>
            <person name="Coutinho P.M."/>
            <person name="Henrissat B."/>
            <person name="Crock L.W."/>
            <person name="Russell A."/>
            <person name="Verberkmoes N.C."/>
            <person name="Hettich R.L."/>
            <person name="Gordon J.I."/>
        </authorList>
    </citation>
    <scope>NUCLEOTIDE SEQUENCE [LARGE SCALE GENOMIC DNA]</scope>
    <source>
        <strain>ATCC 27750 / DSM 3376 / VPI C15-48 / C15-B4</strain>
    </source>
</reference>
<protein>
    <recommendedName>
        <fullName evidence="1">Large ribosomal subunit protein uL16</fullName>
    </recommendedName>
    <alternativeName>
        <fullName evidence="2">50S ribosomal protein L16</fullName>
    </alternativeName>
</protein>
<gene>
    <name evidence="1" type="primary">rplP</name>
    <name type="ordered locus">EUBELI_00306</name>
</gene>
<feature type="chain" id="PRO_1000214730" description="Large ribosomal subunit protein uL16">
    <location>
        <begin position="1"/>
        <end position="145"/>
    </location>
</feature>
<sequence length="145" mass="15993">MLLPKRVKHRRQFRGSMAGKATRGNKITNGEFGIVATEPCWIKSNQIEAARVAMTRYIKRGGKVFIKIFPDKPVTGKPIGVRMGKGKGNLECWVAVVKPGRVMFEISGVAEETAREALRLATHKLPCKCKIVSRADLEGGDNSEN</sequence>
<dbReference type="EMBL" id="CP001104">
    <property type="protein sequence ID" value="ACR71342.1"/>
    <property type="molecule type" value="Genomic_DNA"/>
</dbReference>
<dbReference type="RefSeq" id="WP_012738579.1">
    <property type="nucleotide sequence ID" value="NC_012778.1"/>
</dbReference>
<dbReference type="SMR" id="C4Z2T7"/>
<dbReference type="STRING" id="515620.EUBELI_00306"/>
<dbReference type="GeneID" id="41355079"/>
<dbReference type="KEGG" id="eel:EUBELI_00306"/>
<dbReference type="eggNOG" id="COG0197">
    <property type="taxonomic scope" value="Bacteria"/>
</dbReference>
<dbReference type="HOGENOM" id="CLU_078858_2_1_9"/>
<dbReference type="Proteomes" id="UP000001476">
    <property type="component" value="Chromosome"/>
</dbReference>
<dbReference type="GO" id="GO:0022625">
    <property type="term" value="C:cytosolic large ribosomal subunit"/>
    <property type="evidence" value="ECO:0007669"/>
    <property type="project" value="TreeGrafter"/>
</dbReference>
<dbReference type="GO" id="GO:0019843">
    <property type="term" value="F:rRNA binding"/>
    <property type="evidence" value="ECO:0007669"/>
    <property type="project" value="UniProtKB-UniRule"/>
</dbReference>
<dbReference type="GO" id="GO:0003735">
    <property type="term" value="F:structural constituent of ribosome"/>
    <property type="evidence" value="ECO:0007669"/>
    <property type="project" value="InterPro"/>
</dbReference>
<dbReference type="GO" id="GO:0000049">
    <property type="term" value="F:tRNA binding"/>
    <property type="evidence" value="ECO:0007669"/>
    <property type="project" value="UniProtKB-KW"/>
</dbReference>
<dbReference type="GO" id="GO:0006412">
    <property type="term" value="P:translation"/>
    <property type="evidence" value="ECO:0007669"/>
    <property type="project" value="UniProtKB-UniRule"/>
</dbReference>
<dbReference type="CDD" id="cd01433">
    <property type="entry name" value="Ribosomal_L16_L10e"/>
    <property type="match status" value="1"/>
</dbReference>
<dbReference type="FunFam" id="3.90.1170.10:FF:000001">
    <property type="entry name" value="50S ribosomal protein L16"/>
    <property type="match status" value="1"/>
</dbReference>
<dbReference type="Gene3D" id="3.90.1170.10">
    <property type="entry name" value="Ribosomal protein L10e/L16"/>
    <property type="match status" value="1"/>
</dbReference>
<dbReference type="HAMAP" id="MF_01342">
    <property type="entry name" value="Ribosomal_uL16"/>
    <property type="match status" value="1"/>
</dbReference>
<dbReference type="InterPro" id="IPR047873">
    <property type="entry name" value="Ribosomal_uL16"/>
</dbReference>
<dbReference type="InterPro" id="IPR000114">
    <property type="entry name" value="Ribosomal_uL16_bact-type"/>
</dbReference>
<dbReference type="InterPro" id="IPR020798">
    <property type="entry name" value="Ribosomal_uL16_CS"/>
</dbReference>
<dbReference type="InterPro" id="IPR016180">
    <property type="entry name" value="Ribosomal_uL16_dom"/>
</dbReference>
<dbReference type="InterPro" id="IPR036920">
    <property type="entry name" value="Ribosomal_uL16_sf"/>
</dbReference>
<dbReference type="NCBIfam" id="TIGR01164">
    <property type="entry name" value="rplP_bact"/>
    <property type="match status" value="1"/>
</dbReference>
<dbReference type="PANTHER" id="PTHR12220">
    <property type="entry name" value="50S/60S RIBOSOMAL PROTEIN L16"/>
    <property type="match status" value="1"/>
</dbReference>
<dbReference type="PANTHER" id="PTHR12220:SF13">
    <property type="entry name" value="LARGE RIBOSOMAL SUBUNIT PROTEIN UL16M"/>
    <property type="match status" value="1"/>
</dbReference>
<dbReference type="Pfam" id="PF00252">
    <property type="entry name" value="Ribosomal_L16"/>
    <property type="match status" value="1"/>
</dbReference>
<dbReference type="PRINTS" id="PR00060">
    <property type="entry name" value="RIBOSOMALL16"/>
</dbReference>
<dbReference type="SUPFAM" id="SSF54686">
    <property type="entry name" value="Ribosomal protein L16p/L10e"/>
    <property type="match status" value="1"/>
</dbReference>
<dbReference type="PROSITE" id="PS00701">
    <property type="entry name" value="RIBOSOMAL_L16_2"/>
    <property type="match status" value="1"/>
</dbReference>
<name>RL16_LACE2</name>
<organism>
    <name type="scientific">Lachnospira eligens (strain ATCC 27750 / DSM 3376 / VPI C15-48 / C15-B4)</name>
    <name type="common">Eubacterium eligens</name>
    <dbReference type="NCBI Taxonomy" id="515620"/>
    <lineage>
        <taxon>Bacteria</taxon>
        <taxon>Bacillati</taxon>
        <taxon>Bacillota</taxon>
        <taxon>Clostridia</taxon>
        <taxon>Lachnospirales</taxon>
        <taxon>Lachnospiraceae</taxon>
        <taxon>Lachnospira</taxon>
    </lineage>
</organism>
<evidence type="ECO:0000255" key="1">
    <source>
        <dbReference type="HAMAP-Rule" id="MF_01342"/>
    </source>
</evidence>
<evidence type="ECO:0000305" key="2"/>
<accession>C4Z2T7</accession>